<evidence type="ECO:0000250" key="1"/>
<evidence type="ECO:0000269" key="2">
    <source>
    </source>
</evidence>
<evidence type="ECO:0000305" key="3"/>
<reference key="1">
    <citation type="journal article" date="2002" name="Nature">
        <title>Complete genome sequence of the model actinomycete Streptomyces coelicolor A3(2).</title>
        <authorList>
            <person name="Bentley S.D."/>
            <person name="Chater K.F."/>
            <person name="Cerdeno-Tarraga A.-M."/>
            <person name="Challis G.L."/>
            <person name="Thomson N.R."/>
            <person name="James K.D."/>
            <person name="Harris D.E."/>
            <person name="Quail M.A."/>
            <person name="Kieser H."/>
            <person name="Harper D."/>
            <person name="Bateman A."/>
            <person name="Brown S."/>
            <person name="Chandra G."/>
            <person name="Chen C.W."/>
            <person name="Collins M."/>
            <person name="Cronin A."/>
            <person name="Fraser A."/>
            <person name="Goble A."/>
            <person name="Hidalgo J."/>
            <person name="Hornsby T."/>
            <person name="Howarth S."/>
            <person name="Huang C.-H."/>
            <person name="Kieser T."/>
            <person name="Larke L."/>
            <person name="Murphy L.D."/>
            <person name="Oliver K."/>
            <person name="O'Neil S."/>
            <person name="Rabbinowitsch E."/>
            <person name="Rajandream M.A."/>
            <person name="Rutherford K.M."/>
            <person name="Rutter S."/>
            <person name="Seeger K."/>
            <person name="Saunders D."/>
            <person name="Sharp S."/>
            <person name="Squares R."/>
            <person name="Squares S."/>
            <person name="Taylor K."/>
            <person name="Warren T."/>
            <person name="Wietzorrek A."/>
            <person name="Woodward J.R."/>
            <person name="Barrell B.G."/>
            <person name="Parkhill J."/>
            <person name="Hopwood D.A."/>
        </authorList>
    </citation>
    <scope>NUCLEOTIDE SEQUENCE [LARGE SCALE GENOMIC DNA]</scope>
    <source>
        <strain>ATCC BAA-471 / A3(2) / M145</strain>
    </source>
</reference>
<reference key="2">
    <citation type="journal article" date="2001" name="Biochemistry">
        <title>Vgb from Staphylococcus aureus inactivates streptogramin B antibiotics by an elimination mechanism not hydrolysis.</title>
        <authorList>
            <person name="Mukhtar T.A."/>
            <person name="Koteva K.P."/>
            <person name="Hughes D.W."/>
            <person name="Wright G.D."/>
        </authorList>
    </citation>
    <scope>FUNCTION</scope>
    <scope>BIOPHYSICOCHEMICAL PROPERTIES</scope>
</reference>
<organism>
    <name type="scientific">Streptomyces coelicolor (strain ATCC BAA-471 / A3(2) / M145)</name>
    <dbReference type="NCBI Taxonomy" id="100226"/>
    <lineage>
        <taxon>Bacteria</taxon>
        <taxon>Bacillati</taxon>
        <taxon>Actinomycetota</taxon>
        <taxon>Actinomycetes</taxon>
        <taxon>Kitasatosporales</taxon>
        <taxon>Streptomycetaceae</taxon>
        <taxon>Streptomyces</taxon>
        <taxon>Streptomyces albidoflavus group</taxon>
    </lineage>
</organism>
<comment type="function">
    <text evidence="2">Inactivates the type B streptogramin antibiotics by linearizing the lactone ring at the ester linkage, generating a free phenylglycine carboxylate and converting the threonyl moiety into 2-amino-butenoic acid.</text>
</comment>
<comment type="cofactor">
    <cofactor evidence="1">
        <name>Mg(2+)</name>
        <dbReference type="ChEBI" id="CHEBI:18420"/>
    </cofactor>
</comment>
<comment type="biophysicochemical properties">
    <kinetics>
        <KM evidence="2">27 uM for quinupristin</KM>
    </kinetics>
</comment>
<comment type="subunit">
    <text evidence="1">Monomer.</text>
</comment>
<comment type="similarity">
    <text evidence="3">Belongs to the Vgb family.</text>
</comment>
<name>VGB_STRCO</name>
<dbReference type="EC" id="4.2.99.-"/>
<dbReference type="EMBL" id="AL939120">
    <property type="protein sequence ID" value="CAB88456.1"/>
    <property type="molecule type" value="Genomic_DNA"/>
</dbReference>
<dbReference type="RefSeq" id="NP_628616.1">
    <property type="nucleotide sequence ID" value="NC_003888.3"/>
</dbReference>
<dbReference type="RefSeq" id="WP_011029662.1">
    <property type="nucleotide sequence ID" value="NZ_CP042324.1"/>
</dbReference>
<dbReference type="SMR" id="Q9KZX7"/>
<dbReference type="STRING" id="100226.gene:17762094"/>
<dbReference type="PaxDb" id="100226-SCO4449"/>
<dbReference type="DNASU" id="1099889"/>
<dbReference type="KEGG" id="sco:SCO4449"/>
<dbReference type="PATRIC" id="fig|100226.15.peg.4519"/>
<dbReference type="eggNOG" id="COG4257">
    <property type="taxonomic scope" value="Bacteria"/>
</dbReference>
<dbReference type="HOGENOM" id="CLU_054751_1_0_11"/>
<dbReference type="InParanoid" id="Q9KZX7"/>
<dbReference type="OrthoDB" id="9812926at2"/>
<dbReference type="PhylomeDB" id="Q9KZX7"/>
<dbReference type="SABIO-RK" id="Q9KZX7"/>
<dbReference type="Proteomes" id="UP000001973">
    <property type="component" value="Chromosome"/>
</dbReference>
<dbReference type="GO" id="GO:0016835">
    <property type="term" value="F:carbon-oxygen lyase activity"/>
    <property type="evidence" value="ECO:0007669"/>
    <property type="project" value="UniProtKB-UniRule"/>
</dbReference>
<dbReference type="GO" id="GO:0000287">
    <property type="term" value="F:magnesium ion binding"/>
    <property type="evidence" value="ECO:0007669"/>
    <property type="project" value="InterPro"/>
</dbReference>
<dbReference type="GO" id="GO:0017001">
    <property type="term" value="P:antibiotic catabolic process"/>
    <property type="evidence" value="ECO:0007669"/>
    <property type="project" value="UniProtKB-UniRule"/>
</dbReference>
<dbReference type="GO" id="GO:0046677">
    <property type="term" value="P:response to antibiotic"/>
    <property type="evidence" value="ECO:0007669"/>
    <property type="project" value="UniProtKB-KW"/>
</dbReference>
<dbReference type="Gene3D" id="2.130.10.10">
    <property type="entry name" value="YVTN repeat-like/Quinoprotein amine dehydrogenase"/>
    <property type="match status" value="1"/>
</dbReference>
<dbReference type="HAMAP" id="MF_01282">
    <property type="entry name" value="VirginiamycinB_lyase"/>
    <property type="match status" value="1"/>
</dbReference>
<dbReference type="InterPro" id="IPR011217">
    <property type="entry name" value="Streptogrm_lyase"/>
</dbReference>
<dbReference type="InterPro" id="IPR051344">
    <property type="entry name" value="Vgb"/>
</dbReference>
<dbReference type="InterPro" id="IPR015943">
    <property type="entry name" value="WD40/YVTN_repeat-like_dom_sf"/>
</dbReference>
<dbReference type="PANTHER" id="PTHR40274">
    <property type="entry name" value="VIRGINIAMYCIN B LYASE"/>
    <property type="match status" value="1"/>
</dbReference>
<dbReference type="PANTHER" id="PTHR40274:SF3">
    <property type="entry name" value="VIRGINIAMYCIN B LYASE"/>
    <property type="match status" value="1"/>
</dbReference>
<dbReference type="Pfam" id="PF24684">
    <property type="entry name" value="Vgb_lyase"/>
    <property type="match status" value="1"/>
</dbReference>
<dbReference type="PIRSF" id="PIRSF026412">
    <property type="entry name" value="Streptogrm_lyase"/>
    <property type="match status" value="1"/>
</dbReference>
<dbReference type="SUPFAM" id="SSF63829">
    <property type="entry name" value="Calcium-dependent phosphotriesterase"/>
    <property type="match status" value="1"/>
</dbReference>
<accession>Q9KZX7</accession>
<proteinExistence type="evidence at protein level"/>
<gene>
    <name type="primary">vgb</name>
    <name type="ordered locus">SCO4449</name>
    <name type="ORF">SCD6.27c</name>
</gene>
<feature type="chain" id="PRO_0000313778" description="Virginiamycin B lyase">
    <location>
        <begin position="1"/>
        <end position="299"/>
    </location>
</feature>
<feature type="active site" description="Proton acceptor" evidence="1">
    <location>
        <position position="274"/>
    </location>
</feature>
<feature type="binding site" evidence="1">
    <location>
        <position position="232"/>
    </location>
    <ligand>
        <name>substrate</name>
    </ligand>
</feature>
<feature type="binding site" evidence="1">
    <location>
        <position position="272"/>
    </location>
    <ligand>
        <name>Mg(2+)</name>
        <dbReference type="ChEBI" id="CHEBI:18420"/>
    </ligand>
</feature>
<feature type="binding site" evidence="1">
    <location>
        <position position="288"/>
    </location>
    <ligand>
        <name>Mg(2+)</name>
        <dbReference type="ChEBI" id="CHEBI:18420"/>
    </ligand>
</feature>
<sequence>MNEINESYDTDSVREFTVSDADAGPYALAEGPDGALWFTLVHRGAVARRDPDDGRVTVHPVGDGPTVIAPGPDGALWFTEYRAHRIGRITPEGHYASFAPLTPEGGPFGITAGPDGAMWFTLSSADRVGRVTMDGEVTEHPAPGAFPSALTAGPDGALWCTLNQGNAIGRLTPDGHGTAYPLPTPGAAPVGIAAGPDGALWFTEIGAGRIGRITVTGDLTEYPLSDPAARPHAVTAGPNGALWFTEWGSGRVGRITVDGRVTSYPLSRTDCEPHGIAVHDGALWCALETGSLARIQVPA</sequence>
<protein>
    <recommendedName>
        <fullName>Virginiamycin B lyase</fullName>
        <ecNumber>4.2.99.-</ecNumber>
    </recommendedName>
    <alternativeName>
        <fullName>Streptogramin B lyase</fullName>
    </alternativeName>
</protein>
<keyword id="KW-0046">Antibiotic resistance</keyword>
<keyword id="KW-0456">Lyase</keyword>
<keyword id="KW-0460">Magnesium</keyword>
<keyword id="KW-0479">Metal-binding</keyword>
<keyword id="KW-1185">Reference proteome</keyword>